<keyword id="KW-0040">ANK repeat</keyword>
<keyword id="KW-0963">Cytoplasm</keyword>
<keyword id="KW-0217">Developmental protein</keyword>
<keyword id="KW-0221">Differentiation</keyword>
<keyword id="KW-0469">Meiosis</keyword>
<keyword id="KW-0597">Phosphoprotein</keyword>
<keyword id="KW-1185">Reference proteome</keyword>
<keyword id="KW-0677">Repeat</keyword>
<keyword id="KW-0943">RNA-mediated gene silencing</keyword>
<keyword id="KW-0744">Spermatogenesis</keyword>
<evidence type="ECO:0000250" key="1"/>
<evidence type="ECO:0000250" key="2">
    <source>
        <dbReference type="UniProtKB" id="Q8VD46"/>
    </source>
</evidence>
<evidence type="ECO:0000256" key="3">
    <source>
        <dbReference type="SAM" id="MobiDB-lite"/>
    </source>
</evidence>
<sequence length="475" mass="53364">MAAGALRGLPVAGGGESSESEDDGWEIGYLDRTSQKLKGLLPIEEKKEKFKKAMTIGDVSLVQELLDSGISVDSTFQYGWTPLMYAASVANAELVRVLLDRGANASFEKDKQSILITACSARGSEEQILKCVELLLSRNADPNVACRRLMTPIMYAARDGHTQVVALLVAHGAEVNTQDENGYTALTWAARQGHKNIVLKLLELGANKMLQTKDGKMPSEIAKRNKHHEIFNLLSFTLNPLEGKLQQLTKEDTICKILTTDSDREKDHIFSSYTAFGDLEVFLHGLGLEHMTDLLKERDITLRHLLTMREDEFTKNGITSKDQQKILAALKELQVEEIQFGELSEETKLEISGDEFLNFLLKLNKQCGHLITAVQNIITELPVNSQKITLEWASPRNFTSVCEELVNNVEDLSEEVCKLKDLIQKLQNERENDPTHIQLREEVSTWNSRILKRTAITVCGFGFLLFICKLTFQRK</sequence>
<gene>
    <name type="primary">ASZ1</name>
    <name type="synonym">GASZ</name>
</gene>
<protein>
    <recommendedName>
        <fullName>Ankyrin repeat, SAM and basic leucine zipper domain-containing protein 1</fullName>
    </recommendedName>
    <alternativeName>
        <fullName>Germ cell-specific ankyrin, SAM and basic leucine zipper domain-containing protein</fullName>
    </alternativeName>
</protein>
<dbReference type="EMBL" id="DP000026">
    <property type="protein sequence ID" value="ABC87465.1"/>
    <property type="molecule type" value="Genomic_DNA"/>
</dbReference>
<dbReference type="RefSeq" id="NP_001162004.1">
    <property type="nucleotide sequence ID" value="NM_001168532.1"/>
</dbReference>
<dbReference type="SMR" id="Q2IBE3"/>
<dbReference type="FunCoup" id="Q2IBE3">
    <property type="interactions" value="24"/>
</dbReference>
<dbReference type="STRING" id="9601.ENSPPYP00000020116"/>
<dbReference type="GeneID" id="100137026"/>
<dbReference type="KEGG" id="pon:100137026"/>
<dbReference type="CTD" id="136991"/>
<dbReference type="eggNOG" id="KOG0504">
    <property type="taxonomic scope" value="Eukaryota"/>
</dbReference>
<dbReference type="InParanoid" id="Q2IBE3"/>
<dbReference type="OrthoDB" id="439236at2759"/>
<dbReference type="Proteomes" id="UP000001595">
    <property type="component" value="Unplaced"/>
</dbReference>
<dbReference type="GO" id="GO:0071546">
    <property type="term" value="C:pi-body"/>
    <property type="evidence" value="ECO:0000250"/>
    <property type="project" value="UniProtKB"/>
</dbReference>
<dbReference type="GO" id="GO:0030154">
    <property type="term" value="P:cell differentiation"/>
    <property type="evidence" value="ECO:0007669"/>
    <property type="project" value="UniProtKB-KW"/>
</dbReference>
<dbReference type="GO" id="GO:0007140">
    <property type="term" value="P:male meiotic nuclear division"/>
    <property type="evidence" value="ECO:0000250"/>
    <property type="project" value="UniProtKB"/>
</dbReference>
<dbReference type="GO" id="GO:0031047">
    <property type="term" value="P:regulatory ncRNA-mediated gene silencing"/>
    <property type="evidence" value="ECO:0007669"/>
    <property type="project" value="UniProtKB-KW"/>
</dbReference>
<dbReference type="GO" id="GO:0007283">
    <property type="term" value="P:spermatogenesis"/>
    <property type="evidence" value="ECO:0000250"/>
    <property type="project" value="UniProtKB"/>
</dbReference>
<dbReference type="GO" id="GO:0010526">
    <property type="term" value="P:transposable element silencing"/>
    <property type="evidence" value="ECO:0000250"/>
    <property type="project" value="UniProtKB"/>
</dbReference>
<dbReference type="CDD" id="cd09521">
    <property type="entry name" value="SAM_ASZ1"/>
    <property type="match status" value="1"/>
</dbReference>
<dbReference type="FunFam" id="1.25.40.20:FF:000192">
    <property type="entry name" value="Ankyrin repeat, SAM and basic leucine zipper domain-containing 1"/>
    <property type="match status" value="1"/>
</dbReference>
<dbReference type="FunFam" id="1.10.150.50:FF:000060">
    <property type="entry name" value="Ankyrin repeat, SAM and basic leucine zipper domain-containing protein 1"/>
    <property type="match status" value="1"/>
</dbReference>
<dbReference type="Gene3D" id="1.25.40.20">
    <property type="entry name" value="Ankyrin repeat-containing domain"/>
    <property type="match status" value="1"/>
</dbReference>
<dbReference type="Gene3D" id="1.10.150.50">
    <property type="entry name" value="Transcription Factor, Ets-1"/>
    <property type="match status" value="1"/>
</dbReference>
<dbReference type="InterPro" id="IPR002110">
    <property type="entry name" value="Ankyrin_rpt"/>
</dbReference>
<dbReference type="InterPro" id="IPR036770">
    <property type="entry name" value="Ankyrin_rpt-contain_sf"/>
</dbReference>
<dbReference type="InterPro" id="IPR042650">
    <property type="entry name" value="Asz1_SAM"/>
</dbReference>
<dbReference type="InterPro" id="IPR001660">
    <property type="entry name" value="SAM"/>
</dbReference>
<dbReference type="InterPro" id="IPR013761">
    <property type="entry name" value="SAM/pointed_sf"/>
</dbReference>
<dbReference type="PANTHER" id="PTHR24157">
    <property type="entry name" value="ANKYRIN REPEAT, SAM AND BASIC LEUCINE ZIPPER DOMAIN-CONTAINING PROTEIN 1"/>
    <property type="match status" value="1"/>
</dbReference>
<dbReference type="PANTHER" id="PTHR24157:SF3">
    <property type="entry name" value="ANKYRIN REPEAT, SAM AND BASIC LEUCINE ZIPPER DOMAIN-CONTAINING PROTEIN 1"/>
    <property type="match status" value="1"/>
</dbReference>
<dbReference type="Pfam" id="PF00023">
    <property type="entry name" value="Ank"/>
    <property type="match status" value="1"/>
</dbReference>
<dbReference type="Pfam" id="PF12796">
    <property type="entry name" value="Ank_2"/>
    <property type="match status" value="1"/>
</dbReference>
<dbReference type="Pfam" id="PF07647">
    <property type="entry name" value="SAM_2"/>
    <property type="match status" value="1"/>
</dbReference>
<dbReference type="PRINTS" id="PR01415">
    <property type="entry name" value="ANKYRIN"/>
</dbReference>
<dbReference type="SMART" id="SM00248">
    <property type="entry name" value="ANK"/>
    <property type="match status" value="5"/>
</dbReference>
<dbReference type="SUPFAM" id="SSF48403">
    <property type="entry name" value="Ankyrin repeat"/>
    <property type="match status" value="1"/>
</dbReference>
<dbReference type="SUPFAM" id="SSF140860">
    <property type="entry name" value="Pseudo ankyrin repeat-like"/>
    <property type="match status" value="1"/>
</dbReference>
<dbReference type="SUPFAM" id="SSF47769">
    <property type="entry name" value="SAM/Pointed domain"/>
    <property type="match status" value="1"/>
</dbReference>
<dbReference type="PROSITE" id="PS50297">
    <property type="entry name" value="ANK_REP_REGION"/>
    <property type="match status" value="1"/>
</dbReference>
<dbReference type="PROSITE" id="PS50088">
    <property type="entry name" value="ANK_REPEAT"/>
    <property type="match status" value="3"/>
</dbReference>
<name>ASZ1_PONAB</name>
<organism>
    <name type="scientific">Pongo abelii</name>
    <name type="common">Sumatran orangutan</name>
    <name type="synonym">Pongo pygmaeus abelii</name>
    <dbReference type="NCBI Taxonomy" id="9601"/>
    <lineage>
        <taxon>Eukaryota</taxon>
        <taxon>Metazoa</taxon>
        <taxon>Chordata</taxon>
        <taxon>Craniata</taxon>
        <taxon>Vertebrata</taxon>
        <taxon>Euteleostomi</taxon>
        <taxon>Mammalia</taxon>
        <taxon>Eutheria</taxon>
        <taxon>Euarchontoglires</taxon>
        <taxon>Primates</taxon>
        <taxon>Haplorrhini</taxon>
        <taxon>Catarrhini</taxon>
        <taxon>Hominidae</taxon>
        <taxon>Pongo</taxon>
    </lineage>
</organism>
<reference key="1">
    <citation type="submission" date="2006-01" db="EMBL/GenBank/DDBJ databases">
        <title>NISC comparative sequencing initiative.</title>
        <authorList>
            <person name="Antonellis A."/>
            <person name="Ayele K."/>
            <person name="Benjamin B."/>
            <person name="Blakesley R.W."/>
            <person name="Boakye A."/>
            <person name="Bouffard G.G."/>
            <person name="Brinkley C."/>
            <person name="Brooks S."/>
            <person name="Chu G."/>
            <person name="Coleman H."/>
            <person name="Engle J."/>
            <person name="Gestole M."/>
            <person name="Greene A."/>
            <person name="Guan X."/>
            <person name="Gupta J."/>
            <person name="Haghighi P."/>
            <person name="Han J."/>
            <person name="Hansen N."/>
            <person name="Ho S.-L."/>
            <person name="Hu P."/>
            <person name="Hunter G."/>
            <person name="Hurle B."/>
            <person name="Idol J.R."/>
            <person name="Kwong P."/>
            <person name="Laric P."/>
            <person name="Larson S."/>
            <person name="Lee-Lin S.-Q."/>
            <person name="Legaspi R."/>
            <person name="Madden M."/>
            <person name="Maduro Q.L."/>
            <person name="Maduro V.B."/>
            <person name="Margulies E.H."/>
            <person name="Masiello C."/>
            <person name="Maskeri B."/>
            <person name="McDowell J."/>
            <person name="Mojidi H.A."/>
            <person name="Mullikin J.C."/>
            <person name="Oestreicher J.S."/>
            <person name="Park M."/>
            <person name="Portnoy M.E."/>
            <person name="Prasad A."/>
            <person name="Puri O."/>
            <person name="Reddix-Dugue N."/>
            <person name="Schandler K."/>
            <person name="Schueler M.G."/>
            <person name="Sison C."/>
            <person name="Stantripop S."/>
            <person name="Stephen E."/>
            <person name="Taye A."/>
            <person name="Thomas J.W."/>
            <person name="Thomas P.J."/>
            <person name="Tsipouri V."/>
            <person name="Ung L."/>
            <person name="Vogt J.L."/>
            <person name="Wetherby K.D."/>
            <person name="Young A."/>
            <person name="Green E.D."/>
        </authorList>
    </citation>
    <scope>NUCLEOTIDE SEQUENCE [LARGE SCALE GENOMIC DNA]</scope>
</reference>
<accession>Q2IBE3</accession>
<proteinExistence type="inferred from homology"/>
<feature type="chain" id="PRO_0000229036" description="Ankyrin repeat, SAM and basic leucine zipper domain-containing protein 1">
    <location>
        <begin position="1"/>
        <end position="475"/>
    </location>
</feature>
<feature type="repeat" description="ANK 1">
    <location>
        <begin position="45"/>
        <end position="74"/>
    </location>
</feature>
<feature type="repeat" description="ANK 2">
    <location>
        <begin position="78"/>
        <end position="107"/>
    </location>
</feature>
<feature type="repeat" description="ANK 3">
    <location>
        <begin position="110"/>
        <end position="144"/>
    </location>
</feature>
<feature type="repeat" description="ANK 4">
    <location>
        <begin position="148"/>
        <end position="177"/>
    </location>
</feature>
<feature type="repeat" description="ANK 5">
    <location>
        <begin position="181"/>
        <end position="210"/>
    </location>
</feature>
<feature type="repeat" description="ANK 6">
    <location>
        <begin position="214"/>
        <end position="243"/>
    </location>
</feature>
<feature type="domain" description="SAM">
    <location>
        <begin position="272"/>
        <end position="334"/>
    </location>
</feature>
<feature type="region of interest" description="Disordered" evidence="3">
    <location>
        <begin position="1"/>
        <end position="25"/>
    </location>
</feature>
<feature type="modified residue" description="Phosphoserine" evidence="2">
    <location>
        <position position="17"/>
    </location>
</feature>
<feature type="modified residue" description="Phosphoserine" evidence="2">
    <location>
        <position position="18"/>
    </location>
</feature>
<feature type="modified residue" description="Phosphoserine" evidence="2">
    <location>
        <position position="20"/>
    </location>
</feature>
<comment type="function">
    <text evidence="1">Plays a central role during spermatogenesis by repressing transposable elements and preventing their mobilization, which is essential for the germline integrity. Acts via the piRNA metabolic process, which mediates the repression of transposable elements during meiosis by forming complexes composed of piRNAs and Piwi proteins and governs the methylation and subsequent repression of transposons. Its association with pi-bodies suggests a participation in the primary piRNAs metabolic process. Required prior to the pachytene stage to facilitate the production of multiple types of piRNAs, including those associated with repeats involved in the regulation of retrotransposons. May act by mediating protein-protein interactions during germ cell maturation (By similarity).</text>
</comment>
<comment type="subunit">
    <text evidence="1">Interacts with DDX4, PIWIL1, RANBP9 and TDRD1.</text>
</comment>
<comment type="subcellular location">
    <subcellularLocation>
        <location evidence="1">Cytoplasm</location>
    </subcellularLocation>
    <text evidence="1">Component of the meiotic nuage, also named P granule, a germ-cell-specific organelle required to repress transposon activity during meiosis. Specifically localizes to pi-bodies, a subset of the nuage which contains primary piRNAs (By similarity).</text>
</comment>